<evidence type="ECO:0000255" key="1">
    <source>
        <dbReference type="HAMAP-Rule" id="MF_01187"/>
    </source>
</evidence>
<comment type="similarity">
    <text evidence="1">Belongs to the UPF0434 family.</text>
</comment>
<accession>Q6FYZ3</accession>
<name>Y1015_BARQU</name>
<proteinExistence type="inferred from homology"/>
<sequence>MITDPKMLELLVCPITGGTLSLNRKTQELISFKAKLAYPIRDGVPIMLASEARPLQHNEKRVHKK</sequence>
<protein>
    <recommendedName>
        <fullName evidence="1">UPF0434 protein BQ10150</fullName>
    </recommendedName>
</protein>
<feature type="chain" id="PRO_0000291058" description="UPF0434 protein BQ10150">
    <location>
        <begin position="1"/>
        <end position="65"/>
    </location>
</feature>
<gene>
    <name type="ordered locus">BQ10150</name>
</gene>
<organism>
    <name type="scientific">Bartonella quintana (strain Toulouse)</name>
    <name type="common">Rochalimaea quintana</name>
    <dbReference type="NCBI Taxonomy" id="283165"/>
    <lineage>
        <taxon>Bacteria</taxon>
        <taxon>Pseudomonadati</taxon>
        <taxon>Pseudomonadota</taxon>
        <taxon>Alphaproteobacteria</taxon>
        <taxon>Hyphomicrobiales</taxon>
        <taxon>Bartonellaceae</taxon>
        <taxon>Bartonella</taxon>
    </lineage>
</organism>
<dbReference type="EMBL" id="BX897700">
    <property type="protein sequence ID" value="CAF26483.1"/>
    <property type="molecule type" value="Genomic_DNA"/>
</dbReference>
<dbReference type="SMR" id="Q6FYZ3"/>
<dbReference type="KEGG" id="bqu:BQ10150"/>
<dbReference type="eggNOG" id="COG2835">
    <property type="taxonomic scope" value="Bacteria"/>
</dbReference>
<dbReference type="HOGENOM" id="CLU_155659_2_2_5"/>
<dbReference type="Proteomes" id="UP000000597">
    <property type="component" value="Chromosome"/>
</dbReference>
<dbReference type="GO" id="GO:0005829">
    <property type="term" value="C:cytosol"/>
    <property type="evidence" value="ECO:0007669"/>
    <property type="project" value="TreeGrafter"/>
</dbReference>
<dbReference type="FunFam" id="2.20.25.10:FF:000002">
    <property type="entry name" value="UPF0434 protein YcaR"/>
    <property type="match status" value="1"/>
</dbReference>
<dbReference type="Gene3D" id="2.20.25.10">
    <property type="match status" value="1"/>
</dbReference>
<dbReference type="HAMAP" id="MF_01187">
    <property type="entry name" value="UPF0434"/>
    <property type="match status" value="1"/>
</dbReference>
<dbReference type="InterPro" id="IPR005651">
    <property type="entry name" value="Trm112-like"/>
</dbReference>
<dbReference type="PANTHER" id="PTHR33505:SF4">
    <property type="entry name" value="PROTEIN PREY, MITOCHONDRIAL"/>
    <property type="match status" value="1"/>
</dbReference>
<dbReference type="PANTHER" id="PTHR33505">
    <property type="entry name" value="ZGC:162634"/>
    <property type="match status" value="1"/>
</dbReference>
<dbReference type="Pfam" id="PF03966">
    <property type="entry name" value="Trm112p"/>
    <property type="match status" value="1"/>
</dbReference>
<dbReference type="SUPFAM" id="SSF158997">
    <property type="entry name" value="Trm112p-like"/>
    <property type="match status" value="1"/>
</dbReference>
<reference key="1">
    <citation type="journal article" date="2004" name="Proc. Natl. Acad. Sci. U.S.A.">
        <title>The louse-borne human pathogen Bartonella quintana is a genomic derivative of the zoonotic agent Bartonella henselae.</title>
        <authorList>
            <person name="Alsmark U.C.M."/>
            <person name="Frank A.C."/>
            <person name="Karlberg E.O."/>
            <person name="Legault B.-A."/>
            <person name="Ardell D.H."/>
            <person name="Canbaeck B."/>
            <person name="Eriksson A.-S."/>
            <person name="Naeslund A.K."/>
            <person name="Handley S.A."/>
            <person name="Huvet M."/>
            <person name="La Scola B."/>
            <person name="Holmberg M."/>
            <person name="Andersson S.G.E."/>
        </authorList>
    </citation>
    <scope>NUCLEOTIDE SEQUENCE [LARGE SCALE GENOMIC DNA]</scope>
    <source>
        <strain>Toulouse</strain>
    </source>
</reference>